<evidence type="ECO:0000255" key="1">
    <source>
        <dbReference type="HAMAP-Rule" id="MF_01661"/>
    </source>
</evidence>
<proteinExistence type="inferred from homology"/>
<gene>
    <name evidence="1" type="primary">rbsD</name>
    <name type="ordered locus">BCE33L0576</name>
</gene>
<name>RBSD_BACCZ</name>
<organism>
    <name type="scientific">Bacillus cereus (strain ZK / E33L)</name>
    <dbReference type="NCBI Taxonomy" id="288681"/>
    <lineage>
        <taxon>Bacteria</taxon>
        <taxon>Bacillati</taxon>
        <taxon>Bacillota</taxon>
        <taxon>Bacilli</taxon>
        <taxon>Bacillales</taxon>
        <taxon>Bacillaceae</taxon>
        <taxon>Bacillus</taxon>
        <taxon>Bacillus cereus group</taxon>
    </lineage>
</organism>
<dbReference type="EC" id="5.4.99.62" evidence="1"/>
<dbReference type="EMBL" id="CP000001">
    <property type="protein sequence ID" value="AAU19664.1"/>
    <property type="molecule type" value="Genomic_DNA"/>
</dbReference>
<dbReference type="RefSeq" id="WP_000716139.1">
    <property type="nucleotide sequence ID" value="NC_006274.1"/>
</dbReference>
<dbReference type="SMR" id="Q63FY0"/>
<dbReference type="KEGG" id="bcz:BCE33L0576"/>
<dbReference type="PATRIC" id="fig|288681.22.peg.5016"/>
<dbReference type="UniPathway" id="UPA00916">
    <property type="reaction ID" value="UER00888"/>
</dbReference>
<dbReference type="Proteomes" id="UP000002612">
    <property type="component" value="Chromosome"/>
</dbReference>
<dbReference type="GO" id="GO:0005829">
    <property type="term" value="C:cytosol"/>
    <property type="evidence" value="ECO:0007669"/>
    <property type="project" value="TreeGrafter"/>
</dbReference>
<dbReference type="GO" id="GO:0062193">
    <property type="term" value="F:D-ribose pyranase activity"/>
    <property type="evidence" value="ECO:0007669"/>
    <property type="project" value="UniProtKB-EC"/>
</dbReference>
<dbReference type="GO" id="GO:0016872">
    <property type="term" value="F:intramolecular lyase activity"/>
    <property type="evidence" value="ECO:0007669"/>
    <property type="project" value="UniProtKB-UniRule"/>
</dbReference>
<dbReference type="GO" id="GO:0048029">
    <property type="term" value="F:monosaccharide binding"/>
    <property type="evidence" value="ECO:0007669"/>
    <property type="project" value="InterPro"/>
</dbReference>
<dbReference type="GO" id="GO:0019303">
    <property type="term" value="P:D-ribose catabolic process"/>
    <property type="evidence" value="ECO:0007669"/>
    <property type="project" value="UniProtKB-UniRule"/>
</dbReference>
<dbReference type="FunFam" id="3.40.1650.10:FF:000003">
    <property type="entry name" value="D-ribose pyranase"/>
    <property type="match status" value="1"/>
</dbReference>
<dbReference type="Gene3D" id="3.40.1650.10">
    <property type="entry name" value="RbsD-like domain"/>
    <property type="match status" value="1"/>
</dbReference>
<dbReference type="HAMAP" id="MF_01661">
    <property type="entry name" value="D_rib_pyranase"/>
    <property type="match status" value="1"/>
</dbReference>
<dbReference type="InterPro" id="IPR023064">
    <property type="entry name" value="D-ribose_pyranase"/>
</dbReference>
<dbReference type="InterPro" id="IPR023750">
    <property type="entry name" value="RbsD-like_sf"/>
</dbReference>
<dbReference type="InterPro" id="IPR007721">
    <property type="entry name" value="RbsD_FucU"/>
</dbReference>
<dbReference type="NCBIfam" id="NF008761">
    <property type="entry name" value="PRK11797.1"/>
    <property type="match status" value="1"/>
</dbReference>
<dbReference type="PANTHER" id="PTHR37831">
    <property type="entry name" value="D-RIBOSE PYRANASE"/>
    <property type="match status" value="1"/>
</dbReference>
<dbReference type="PANTHER" id="PTHR37831:SF1">
    <property type="entry name" value="D-RIBOSE PYRANASE"/>
    <property type="match status" value="1"/>
</dbReference>
<dbReference type="Pfam" id="PF05025">
    <property type="entry name" value="RbsD_FucU"/>
    <property type="match status" value="1"/>
</dbReference>
<dbReference type="SUPFAM" id="SSF102546">
    <property type="entry name" value="RbsD-like"/>
    <property type="match status" value="1"/>
</dbReference>
<comment type="function">
    <text evidence="1">Catalyzes the interconversion of beta-pyran and beta-furan forms of D-ribose.</text>
</comment>
<comment type="catalytic activity">
    <reaction evidence="1">
        <text>beta-D-ribopyranose = beta-D-ribofuranose</text>
        <dbReference type="Rhea" id="RHEA:25432"/>
        <dbReference type="ChEBI" id="CHEBI:27476"/>
        <dbReference type="ChEBI" id="CHEBI:47002"/>
        <dbReference type="EC" id="5.4.99.62"/>
    </reaction>
</comment>
<comment type="pathway">
    <text evidence="1">Carbohydrate metabolism; D-ribose degradation; D-ribose 5-phosphate from beta-D-ribopyranose: step 1/2.</text>
</comment>
<comment type="subunit">
    <text evidence="1">Homodecamer.</text>
</comment>
<comment type="subcellular location">
    <subcellularLocation>
        <location evidence="1">Cytoplasm</location>
    </subcellularLocation>
</comment>
<comment type="similarity">
    <text evidence="1">Belongs to the RbsD / FucU family. RbsD subfamily.</text>
</comment>
<accession>Q63FY0</accession>
<sequence length="131" mass="14327">MKKHGVLNSEIAAVLASLGHTDTIVIADCGLPIPDGVKRIDLAVEIGKPSFLDVLQVVADDMAIEKVTLAEEVINNNAEIKKEIELKLIEPVFEYVCHEQFKEHTKKAKAIIRTGEATPYANVILHAGVIF</sequence>
<feature type="chain" id="PRO_0000346173" description="D-ribose pyranase">
    <location>
        <begin position="1"/>
        <end position="131"/>
    </location>
</feature>
<feature type="active site" description="Proton donor" evidence="1">
    <location>
        <position position="20"/>
    </location>
</feature>
<feature type="binding site" evidence="1">
    <location>
        <position position="28"/>
    </location>
    <ligand>
        <name>substrate</name>
    </ligand>
</feature>
<feature type="binding site" evidence="1">
    <location>
        <position position="98"/>
    </location>
    <ligand>
        <name>substrate</name>
    </ligand>
</feature>
<feature type="binding site" evidence="1">
    <location>
        <begin position="120"/>
        <end position="122"/>
    </location>
    <ligand>
        <name>substrate</name>
    </ligand>
</feature>
<reference key="1">
    <citation type="journal article" date="2006" name="J. Bacteriol.">
        <title>Pathogenomic sequence analysis of Bacillus cereus and Bacillus thuringiensis isolates closely related to Bacillus anthracis.</title>
        <authorList>
            <person name="Han C.S."/>
            <person name="Xie G."/>
            <person name="Challacombe J.F."/>
            <person name="Altherr M.R."/>
            <person name="Bhotika S.S."/>
            <person name="Bruce D."/>
            <person name="Campbell C.S."/>
            <person name="Campbell M.L."/>
            <person name="Chen J."/>
            <person name="Chertkov O."/>
            <person name="Cleland C."/>
            <person name="Dimitrijevic M."/>
            <person name="Doggett N.A."/>
            <person name="Fawcett J.J."/>
            <person name="Glavina T."/>
            <person name="Goodwin L.A."/>
            <person name="Hill K.K."/>
            <person name="Hitchcock P."/>
            <person name="Jackson P.J."/>
            <person name="Keim P."/>
            <person name="Kewalramani A.R."/>
            <person name="Longmire J."/>
            <person name="Lucas S."/>
            <person name="Malfatti S."/>
            <person name="McMurry K."/>
            <person name="Meincke L.J."/>
            <person name="Misra M."/>
            <person name="Moseman B.L."/>
            <person name="Mundt M."/>
            <person name="Munk A.C."/>
            <person name="Okinaka R.T."/>
            <person name="Parson-Quintana B."/>
            <person name="Reilly L.P."/>
            <person name="Richardson P."/>
            <person name="Robinson D.L."/>
            <person name="Rubin E."/>
            <person name="Saunders E."/>
            <person name="Tapia R."/>
            <person name="Tesmer J.G."/>
            <person name="Thayer N."/>
            <person name="Thompson L.S."/>
            <person name="Tice H."/>
            <person name="Ticknor L.O."/>
            <person name="Wills P.L."/>
            <person name="Brettin T.S."/>
            <person name="Gilna P."/>
        </authorList>
    </citation>
    <scope>NUCLEOTIDE SEQUENCE [LARGE SCALE GENOMIC DNA]</scope>
    <source>
        <strain>ZK / E33L</strain>
    </source>
</reference>
<keyword id="KW-0119">Carbohydrate metabolism</keyword>
<keyword id="KW-0963">Cytoplasm</keyword>
<keyword id="KW-0413">Isomerase</keyword>
<protein>
    <recommendedName>
        <fullName evidence="1">D-ribose pyranase</fullName>
        <ecNumber evidence="1">5.4.99.62</ecNumber>
    </recommendedName>
</protein>